<accession>Q9ZWJ3</accession>
<accession>C0Z2M0</accession>
<accession>Q8W4G1</accession>
<protein>
    <recommendedName>
        <fullName>UDP-glycosyltransferase 85A2</fullName>
        <ecNumber>2.4.1.-</ecNumber>
    </recommendedName>
</protein>
<feature type="chain" id="PRO_0000409126" description="UDP-glycosyltransferase 85A2">
    <location>
        <begin position="1"/>
        <end position="481"/>
    </location>
</feature>
<feature type="binding site" evidence="1">
    <location>
        <position position="303"/>
    </location>
    <ligand>
        <name>UDP-alpha-D-glucose</name>
        <dbReference type="ChEBI" id="CHEBI:58885"/>
    </ligand>
</feature>
<feature type="binding site" evidence="1">
    <location>
        <begin position="360"/>
        <end position="362"/>
    </location>
    <ligand>
        <name>UDP-alpha-D-glucose</name>
        <dbReference type="ChEBI" id="CHEBI:58885"/>
    </ligand>
</feature>
<feature type="binding site" evidence="1">
    <location>
        <begin position="377"/>
        <end position="385"/>
    </location>
    <ligand>
        <name>UDP-alpha-D-glucose</name>
        <dbReference type="ChEBI" id="CHEBI:58885"/>
    </ligand>
</feature>
<feature type="binding site" evidence="1">
    <location>
        <begin position="399"/>
        <end position="402"/>
    </location>
    <ligand>
        <name>UDP-alpha-D-glucose</name>
        <dbReference type="ChEBI" id="CHEBI:58885"/>
    </ligand>
</feature>
<feature type="splice variant" id="VSP_041229" description="In isoform 2." evidence="3">
    <original>REE</original>
    <variation>SEE</variation>
    <location>
        <begin position="425"/>
        <end position="427"/>
    </location>
</feature>
<feature type="splice variant" id="VSP_041230" description="In isoform 2." evidence="3">
    <location>
        <begin position="428"/>
        <end position="481"/>
    </location>
</feature>
<feature type="sequence conflict" description="In Ref. 4; AAL32657/AAM13356." evidence="4" ref="4">
    <original>N</original>
    <variation>D</variation>
    <location>
        <position position="191"/>
    </location>
</feature>
<feature type="sequence conflict" description="In Ref. 4; AAL32657/AAM13356." evidence="4" ref="4">
    <original>D</original>
    <variation>N</variation>
    <location>
        <position position="219"/>
    </location>
</feature>
<organism>
    <name type="scientific">Arabidopsis thaliana</name>
    <name type="common">Mouse-ear cress</name>
    <dbReference type="NCBI Taxonomy" id="3702"/>
    <lineage>
        <taxon>Eukaryota</taxon>
        <taxon>Viridiplantae</taxon>
        <taxon>Streptophyta</taxon>
        <taxon>Embryophyta</taxon>
        <taxon>Tracheophyta</taxon>
        <taxon>Spermatophyta</taxon>
        <taxon>Magnoliopsida</taxon>
        <taxon>eudicotyledons</taxon>
        <taxon>Gunneridae</taxon>
        <taxon>Pentapetalae</taxon>
        <taxon>rosids</taxon>
        <taxon>malvids</taxon>
        <taxon>Brassicales</taxon>
        <taxon>Brassicaceae</taxon>
        <taxon>Camelineae</taxon>
        <taxon>Arabidopsis</taxon>
    </lineage>
</organism>
<sequence length="481" mass="54364">MGSHVAQKQHVVCVPYPAQGHINPMMKVAKLLYAKGFHITFVNTVYNHNRLLRSRGPNAVDGLPSFRFESIPDGLPETDVDVTQDIPTLCESTMKHCLAPFKELLRQINARDDVPPVSCIVSDGCMSFTLDAAEELGVPEVLFWTTSACGFLAYLYYYRFIEKGLSPIKDESYLTKEHLDTKIDWIPSMKNLRLKDIPSFIRTTNPDDIMLNFIIREADRAKRASAIILNTFDDLEHDVIQSMKSIVPPVYSIGPLHLLEKQESGEYSEIGRTGSNLWREETECLDWLNTKARNSVVYVNFGSITVLSAKQLVEFAWGLAATGKEFLWVIRPDLVAGDEAMVPPEFLTATADRRMLASWCPQEKVLSHPAIGGFLTHCGWNSTLESLCGGVPMVCWPFFAEQQTNCKFSRDEWEVGIEIGGDVKREEVEAVVRELMDEEKGKNMREKAEEWRRLANEATEHKHGSSKLNFEMLVNKVLLGE</sequence>
<dbReference type="EC" id="2.4.1.-"/>
<dbReference type="EMBL" id="AB016819">
    <property type="protein sequence ID" value="BAA34687.1"/>
    <property type="molecule type" value="mRNA"/>
</dbReference>
<dbReference type="EMBL" id="AC068562">
    <property type="protein sequence ID" value="AAF87256.1"/>
    <property type="molecule type" value="Genomic_DNA"/>
</dbReference>
<dbReference type="EMBL" id="CP002684">
    <property type="protein sequence ID" value="AEE30232.1"/>
    <property type="molecule type" value="Genomic_DNA"/>
</dbReference>
<dbReference type="EMBL" id="AF332418">
    <property type="protein sequence ID" value="AAG48781.1"/>
    <property type="molecule type" value="mRNA"/>
</dbReference>
<dbReference type="EMBL" id="AY062579">
    <property type="protein sequence ID" value="AAL32657.1"/>
    <property type="molecule type" value="mRNA"/>
</dbReference>
<dbReference type="EMBL" id="AY093357">
    <property type="protein sequence ID" value="AAM13356.1"/>
    <property type="molecule type" value="mRNA"/>
</dbReference>
<dbReference type="EMBL" id="AK318834">
    <property type="protein sequence ID" value="BAH56949.1"/>
    <property type="molecule type" value="mRNA"/>
</dbReference>
<dbReference type="PIR" id="E86356">
    <property type="entry name" value="E86356"/>
</dbReference>
<dbReference type="RefSeq" id="NP_173653.1">
    <molecule id="Q9ZWJ3-1"/>
    <property type="nucleotide sequence ID" value="NM_102086.3"/>
</dbReference>
<dbReference type="SMR" id="Q9ZWJ3"/>
<dbReference type="BioGRID" id="24082">
    <property type="interactions" value="1"/>
</dbReference>
<dbReference type="FunCoup" id="Q9ZWJ3">
    <property type="interactions" value="300"/>
</dbReference>
<dbReference type="STRING" id="3702.Q9ZWJ3"/>
<dbReference type="CAZy" id="GT1">
    <property type="family name" value="Glycosyltransferase Family 1"/>
</dbReference>
<dbReference type="iPTMnet" id="Q9ZWJ3"/>
<dbReference type="PaxDb" id="3702-AT1G22360.1"/>
<dbReference type="ProteomicsDB" id="228734">
    <molecule id="Q9ZWJ3-1"/>
</dbReference>
<dbReference type="EnsemblPlants" id="AT1G22360.1">
    <molecule id="Q9ZWJ3-1"/>
    <property type="protein sequence ID" value="AT1G22360.1"/>
    <property type="gene ID" value="AT1G22360"/>
</dbReference>
<dbReference type="GeneID" id="838843"/>
<dbReference type="Gramene" id="AT1G22360.1">
    <molecule id="Q9ZWJ3-1"/>
    <property type="protein sequence ID" value="AT1G22360.1"/>
    <property type="gene ID" value="AT1G22360"/>
</dbReference>
<dbReference type="KEGG" id="ath:AT1G22360"/>
<dbReference type="Araport" id="AT1G22360"/>
<dbReference type="TAIR" id="AT1G22360">
    <property type="gene designation" value="UGT85A2"/>
</dbReference>
<dbReference type="eggNOG" id="KOG1192">
    <property type="taxonomic scope" value="Eukaryota"/>
</dbReference>
<dbReference type="HOGENOM" id="CLU_001724_0_0_1"/>
<dbReference type="InParanoid" id="Q9ZWJ3"/>
<dbReference type="OMA" id="CESTPKY"/>
<dbReference type="PhylomeDB" id="Q9ZWJ3"/>
<dbReference type="BioCyc" id="ARA:AT1G22360-MONOMER"/>
<dbReference type="PRO" id="PR:Q9ZWJ3"/>
<dbReference type="Proteomes" id="UP000006548">
    <property type="component" value="Chromosome 1"/>
</dbReference>
<dbReference type="ExpressionAtlas" id="Q9ZWJ3">
    <property type="expression patterns" value="baseline and differential"/>
</dbReference>
<dbReference type="GO" id="GO:0015020">
    <property type="term" value="F:glucuronosyltransferase activity"/>
    <property type="evidence" value="ECO:0000250"/>
    <property type="project" value="TAIR"/>
</dbReference>
<dbReference type="GO" id="GO:0035251">
    <property type="term" value="F:UDP-glucosyltransferase activity"/>
    <property type="evidence" value="ECO:0007669"/>
    <property type="project" value="UniProtKB-ARBA"/>
</dbReference>
<dbReference type="CDD" id="cd03784">
    <property type="entry name" value="GT1_Gtf-like"/>
    <property type="match status" value="1"/>
</dbReference>
<dbReference type="FunFam" id="3.40.50.2000:FF:000027">
    <property type="entry name" value="Glycosyltransferase"/>
    <property type="match status" value="1"/>
</dbReference>
<dbReference type="FunFam" id="3.40.50.2000:FF:000055">
    <property type="entry name" value="Glycosyltransferase"/>
    <property type="match status" value="1"/>
</dbReference>
<dbReference type="Gene3D" id="3.40.50.2000">
    <property type="entry name" value="Glycogen Phosphorylase B"/>
    <property type="match status" value="2"/>
</dbReference>
<dbReference type="InterPro" id="IPR002213">
    <property type="entry name" value="UDP_glucos_trans"/>
</dbReference>
<dbReference type="InterPro" id="IPR035595">
    <property type="entry name" value="UDP_glycos_trans_CS"/>
</dbReference>
<dbReference type="PANTHER" id="PTHR11926">
    <property type="entry name" value="GLUCOSYL/GLUCURONOSYL TRANSFERASES"/>
    <property type="match status" value="1"/>
</dbReference>
<dbReference type="PANTHER" id="PTHR11926:SF774">
    <property type="entry name" value="UDP-GLYCOSYLTRANSFERASE 85A1-RELATED"/>
    <property type="match status" value="1"/>
</dbReference>
<dbReference type="Pfam" id="PF00201">
    <property type="entry name" value="UDPGT"/>
    <property type="match status" value="1"/>
</dbReference>
<dbReference type="SUPFAM" id="SSF53756">
    <property type="entry name" value="UDP-Glycosyltransferase/glycogen phosphorylase"/>
    <property type="match status" value="1"/>
</dbReference>
<dbReference type="PROSITE" id="PS00375">
    <property type="entry name" value="UDPGT"/>
    <property type="match status" value="1"/>
</dbReference>
<reference key="1">
    <citation type="online journal article" date="1998" name="Plant Gene Register">
        <title>Molecular cloning of a cDNA encoding a novel VDP-Glucose glucosyltransferase homologue from Arabidopsis thaliana.</title>
        <authorList>
            <person name="Yamagishi E."/>
            <person name="Gond Z."/>
            <person name="Yamazaki M."/>
            <person name="Saito K."/>
        </authorList>
        <locator>PGR98-187</locator>
    </citation>
    <scope>NUCLEOTIDE SEQUENCE [MRNA] (ISOFORM 1)</scope>
    <source>
        <strain>cv. Columbia</strain>
    </source>
</reference>
<reference key="2">
    <citation type="journal article" date="2000" name="Nature">
        <title>Sequence and analysis of chromosome 1 of the plant Arabidopsis thaliana.</title>
        <authorList>
            <person name="Theologis A."/>
            <person name="Ecker J.R."/>
            <person name="Palm C.J."/>
            <person name="Federspiel N.A."/>
            <person name="Kaul S."/>
            <person name="White O."/>
            <person name="Alonso J."/>
            <person name="Altafi H."/>
            <person name="Araujo R."/>
            <person name="Bowman C.L."/>
            <person name="Brooks S.Y."/>
            <person name="Buehler E."/>
            <person name="Chan A."/>
            <person name="Chao Q."/>
            <person name="Chen H."/>
            <person name="Cheuk R.F."/>
            <person name="Chin C.W."/>
            <person name="Chung M.K."/>
            <person name="Conn L."/>
            <person name="Conway A.B."/>
            <person name="Conway A.R."/>
            <person name="Creasy T.H."/>
            <person name="Dewar K."/>
            <person name="Dunn P."/>
            <person name="Etgu P."/>
            <person name="Feldblyum T.V."/>
            <person name="Feng J.-D."/>
            <person name="Fong B."/>
            <person name="Fujii C.Y."/>
            <person name="Gill J.E."/>
            <person name="Goldsmith A.D."/>
            <person name="Haas B."/>
            <person name="Hansen N.F."/>
            <person name="Hughes B."/>
            <person name="Huizar L."/>
            <person name="Hunter J.L."/>
            <person name="Jenkins J."/>
            <person name="Johnson-Hopson C."/>
            <person name="Khan S."/>
            <person name="Khaykin E."/>
            <person name="Kim C.J."/>
            <person name="Koo H.L."/>
            <person name="Kremenetskaia I."/>
            <person name="Kurtz D.B."/>
            <person name="Kwan A."/>
            <person name="Lam B."/>
            <person name="Langin-Hooper S."/>
            <person name="Lee A."/>
            <person name="Lee J.M."/>
            <person name="Lenz C.A."/>
            <person name="Li J.H."/>
            <person name="Li Y.-P."/>
            <person name="Lin X."/>
            <person name="Liu S.X."/>
            <person name="Liu Z.A."/>
            <person name="Luros J.S."/>
            <person name="Maiti R."/>
            <person name="Marziali A."/>
            <person name="Militscher J."/>
            <person name="Miranda M."/>
            <person name="Nguyen M."/>
            <person name="Nierman W.C."/>
            <person name="Osborne B.I."/>
            <person name="Pai G."/>
            <person name="Peterson J."/>
            <person name="Pham P.K."/>
            <person name="Rizzo M."/>
            <person name="Rooney T."/>
            <person name="Rowley D."/>
            <person name="Sakano H."/>
            <person name="Salzberg S.L."/>
            <person name="Schwartz J.R."/>
            <person name="Shinn P."/>
            <person name="Southwick A.M."/>
            <person name="Sun H."/>
            <person name="Tallon L.J."/>
            <person name="Tambunga G."/>
            <person name="Toriumi M.J."/>
            <person name="Town C.D."/>
            <person name="Utterback T."/>
            <person name="Van Aken S."/>
            <person name="Vaysberg M."/>
            <person name="Vysotskaia V.S."/>
            <person name="Walker M."/>
            <person name="Wu D."/>
            <person name="Yu G."/>
            <person name="Fraser C.M."/>
            <person name="Venter J.C."/>
            <person name="Davis R.W."/>
        </authorList>
    </citation>
    <scope>NUCLEOTIDE SEQUENCE [LARGE SCALE GENOMIC DNA]</scope>
    <source>
        <strain>cv. Columbia</strain>
    </source>
</reference>
<reference key="3">
    <citation type="journal article" date="2017" name="Plant J.">
        <title>Araport11: a complete reannotation of the Arabidopsis thaliana reference genome.</title>
        <authorList>
            <person name="Cheng C.Y."/>
            <person name="Krishnakumar V."/>
            <person name="Chan A.P."/>
            <person name="Thibaud-Nissen F."/>
            <person name="Schobel S."/>
            <person name="Town C.D."/>
        </authorList>
    </citation>
    <scope>GENOME REANNOTATION</scope>
    <source>
        <strain>cv. Columbia</strain>
    </source>
</reference>
<reference key="4">
    <citation type="journal article" date="2003" name="Science">
        <title>Empirical analysis of transcriptional activity in the Arabidopsis genome.</title>
        <authorList>
            <person name="Yamada K."/>
            <person name="Lim J."/>
            <person name="Dale J.M."/>
            <person name="Chen H."/>
            <person name="Shinn P."/>
            <person name="Palm C.J."/>
            <person name="Southwick A.M."/>
            <person name="Wu H.C."/>
            <person name="Kim C.J."/>
            <person name="Nguyen M."/>
            <person name="Pham P.K."/>
            <person name="Cheuk R.F."/>
            <person name="Karlin-Newmann G."/>
            <person name="Liu S.X."/>
            <person name="Lam B."/>
            <person name="Sakano H."/>
            <person name="Wu T."/>
            <person name="Yu G."/>
            <person name="Miranda M."/>
            <person name="Quach H.L."/>
            <person name="Tripp M."/>
            <person name="Chang C.H."/>
            <person name="Lee J.M."/>
            <person name="Toriumi M.J."/>
            <person name="Chan M.M."/>
            <person name="Tang C.C."/>
            <person name="Onodera C.S."/>
            <person name="Deng J.M."/>
            <person name="Akiyama K."/>
            <person name="Ansari Y."/>
            <person name="Arakawa T."/>
            <person name="Banh J."/>
            <person name="Banno F."/>
            <person name="Bowser L."/>
            <person name="Brooks S.Y."/>
            <person name="Carninci P."/>
            <person name="Chao Q."/>
            <person name="Choy N."/>
            <person name="Enju A."/>
            <person name="Goldsmith A.D."/>
            <person name="Gurjal M."/>
            <person name="Hansen N.F."/>
            <person name="Hayashizaki Y."/>
            <person name="Johnson-Hopson C."/>
            <person name="Hsuan V.W."/>
            <person name="Iida K."/>
            <person name="Karnes M."/>
            <person name="Khan S."/>
            <person name="Koesema E."/>
            <person name="Ishida J."/>
            <person name="Jiang P.X."/>
            <person name="Jones T."/>
            <person name="Kawai J."/>
            <person name="Kamiya A."/>
            <person name="Meyers C."/>
            <person name="Nakajima M."/>
            <person name="Narusaka M."/>
            <person name="Seki M."/>
            <person name="Sakurai T."/>
            <person name="Satou M."/>
            <person name="Tamse R."/>
            <person name="Vaysberg M."/>
            <person name="Wallender E.K."/>
            <person name="Wong C."/>
            <person name="Yamamura Y."/>
            <person name="Yuan S."/>
            <person name="Shinozaki K."/>
            <person name="Davis R.W."/>
            <person name="Theologis A."/>
            <person name="Ecker J.R."/>
        </authorList>
    </citation>
    <scope>NUCLEOTIDE SEQUENCE [LARGE SCALE MRNA] (ISOFORM 1)</scope>
    <source>
        <strain>cv. Columbia</strain>
    </source>
</reference>
<reference key="5">
    <citation type="journal article" date="2009" name="DNA Res.">
        <title>Analysis of multiple occurrences of alternative splicing events in Arabidopsis thaliana using novel sequenced full-length cDNAs.</title>
        <authorList>
            <person name="Iida K."/>
            <person name="Fukami-Kobayashi K."/>
            <person name="Toyoda A."/>
            <person name="Sakaki Y."/>
            <person name="Kobayashi M."/>
            <person name="Seki M."/>
            <person name="Shinozaki K."/>
        </authorList>
    </citation>
    <scope>NUCLEOTIDE SEQUENCE [LARGE SCALE MRNA] (ISOFORM 2)</scope>
    <source>
        <strain>cv. Columbia</strain>
    </source>
</reference>
<reference key="6">
    <citation type="journal article" date="2001" name="J. Biol. Chem.">
        <title>Phylogenetic analysis of the UDP-glycosyltransferase multigene family of Arabidopsis thaliana.</title>
        <authorList>
            <person name="Li Y."/>
            <person name="Baldauf S."/>
            <person name="Lim E.K."/>
            <person name="Bowles D.J."/>
        </authorList>
    </citation>
    <scope>GENE FAMILY</scope>
</reference>
<reference key="7">
    <citation type="journal article" date="2007" name="Genomics">
        <title>Characterization of Arabidopsis AtUGT85A and AtGUS gene families and their expression in rapidly dividing tissues.</title>
        <authorList>
            <person name="Woo H.H."/>
            <person name="Jeong B.R."/>
            <person name="Hirsch A.M."/>
            <person name="Hawes M.C."/>
        </authorList>
    </citation>
    <scope>TISSUE SPECIFICITY</scope>
</reference>
<proteinExistence type="evidence at transcript level"/>
<name>U85A2_ARATH</name>
<gene>
    <name type="primary">UGT85A2</name>
    <name type="ordered locus">At1g22360</name>
    <name type="ORF">T16E15.3</name>
</gene>
<evidence type="ECO:0000250" key="1"/>
<evidence type="ECO:0000269" key="2">
    <source>
    </source>
</evidence>
<evidence type="ECO:0000303" key="3">
    <source>
    </source>
</evidence>
<evidence type="ECO:0000305" key="4"/>
<keyword id="KW-0025">Alternative splicing</keyword>
<keyword id="KW-0328">Glycosyltransferase</keyword>
<keyword id="KW-1185">Reference proteome</keyword>
<keyword id="KW-0808">Transferase</keyword>
<comment type="alternative products">
    <event type="alternative splicing"/>
    <isoform>
        <id>Q9ZWJ3-1</id>
        <name>1</name>
        <sequence type="displayed"/>
    </isoform>
    <isoform>
        <id>Q9ZWJ3-3</id>
        <name>2</name>
        <sequence type="described" ref="VSP_041229 VSP_041230"/>
    </isoform>
</comment>
<comment type="tissue specificity">
    <text evidence="2">Expressed in roots, shoots, leaves and flowers.</text>
</comment>
<comment type="similarity">
    <text evidence="4">Belongs to the UDP-glycosyltransferase family.</text>
</comment>